<dbReference type="EMBL" id="AF241364">
    <property type="protein sequence ID" value="AAF98386.1"/>
    <property type="molecule type" value="mRNA"/>
</dbReference>
<dbReference type="EMBL" id="AF241365">
    <property type="protein sequence ID" value="AAF98387.1"/>
    <property type="molecule type" value="mRNA"/>
</dbReference>
<dbReference type="EMBL" id="AF241366">
    <property type="protein sequence ID" value="AAF98388.1"/>
    <property type="molecule type" value="mRNA"/>
</dbReference>
<dbReference type="EMBL" id="AE013599">
    <property type="protein sequence ID" value="AAF58240.1"/>
    <property type="molecule type" value="Genomic_DNA"/>
</dbReference>
<dbReference type="EMBL" id="AE013599">
    <property type="protein sequence ID" value="AAM68553.1"/>
    <property type="molecule type" value="Genomic_DNA"/>
</dbReference>
<dbReference type="EMBL" id="AY051896">
    <property type="protein sequence ID" value="AAK93320.1"/>
    <property type="molecule type" value="mRNA"/>
</dbReference>
<dbReference type="RefSeq" id="NP_725397.1">
    <molecule id="Q9V726-2"/>
    <property type="nucleotide sequence ID" value="NM_166056.3"/>
</dbReference>
<dbReference type="RefSeq" id="NP_995833.1">
    <molecule id="Q9V726-1"/>
    <property type="nucleotide sequence ID" value="NM_206111.3"/>
</dbReference>
<dbReference type="SMR" id="Q9V726"/>
<dbReference type="BioGRID" id="68918">
    <property type="interactions" value="4"/>
</dbReference>
<dbReference type="FunCoup" id="Q9V726">
    <property type="interactions" value="2558"/>
</dbReference>
<dbReference type="IntAct" id="Q9V726">
    <property type="interactions" value="6"/>
</dbReference>
<dbReference type="STRING" id="7227.FBpp0089163"/>
<dbReference type="PaxDb" id="7227-FBpp0089163"/>
<dbReference type="DNASU" id="44250"/>
<dbReference type="EnsemblMetazoa" id="FBtr0089257">
    <molecule id="Q9V726-2"/>
    <property type="protein sequence ID" value="FBpp0088317"/>
    <property type="gene ID" value="FBgn0024698"/>
</dbReference>
<dbReference type="EnsemblMetazoa" id="FBtr0089258">
    <molecule id="Q9V726-1"/>
    <property type="protein sequence ID" value="FBpp0089163"/>
    <property type="gene ID" value="FBgn0024698"/>
</dbReference>
<dbReference type="GeneID" id="44250"/>
<dbReference type="KEGG" id="dme:Dmel_CG10110"/>
<dbReference type="AGR" id="FB:FBgn0024698"/>
<dbReference type="CTD" id="44250"/>
<dbReference type="FlyBase" id="FBgn0024698">
    <property type="gene designation" value="Cpsf160"/>
</dbReference>
<dbReference type="VEuPathDB" id="VectorBase:FBgn0024698"/>
<dbReference type="eggNOG" id="KOG1896">
    <property type="taxonomic scope" value="Eukaryota"/>
</dbReference>
<dbReference type="GeneTree" id="ENSGT00950000183151"/>
<dbReference type="HOGENOM" id="CLU_002414_0_0_1"/>
<dbReference type="InParanoid" id="Q9V726"/>
<dbReference type="OMA" id="PMTKFKL"/>
<dbReference type="OrthoDB" id="6109at2759"/>
<dbReference type="PhylomeDB" id="Q9V726"/>
<dbReference type="Reactome" id="R-DME-159231">
    <property type="pathway name" value="Transport of Mature mRNA Derived from an Intronless Transcript"/>
</dbReference>
<dbReference type="Reactome" id="R-DME-72187">
    <property type="pathway name" value="mRNA 3'-end processing"/>
</dbReference>
<dbReference type="Reactome" id="R-DME-72203">
    <property type="pathway name" value="Processing of Capped Intron-Containing Pre-mRNA"/>
</dbReference>
<dbReference type="Reactome" id="R-DME-73856">
    <property type="pathway name" value="RNA Polymerase II Transcription Termination"/>
</dbReference>
<dbReference type="Reactome" id="R-DME-77595">
    <property type="pathway name" value="Processing of Intronless Pre-mRNAs"/>
</dbReference>
<dbReference type="SignaLink" id="Q9V726"/>
<dbReference type="BioGRID-ORCS" id="44250">
    <property type="hits" value="1 hit in 1 CRISPR screen"/>
</dbReference>
<dbReference type="GenomeRNAi" id="44250"/>
<dbReference type="PRO" id="PR:Q9V726"/>
<dbReference type="Proteomes" id="UP000000803">
    <property type="component" value="Chromosome 2R"/>
</dbReference>
<dbReference type="Bgee" id="FBgn0024698">
    <property type="expression patterns" value="Expressed in egg cell and 43 other cell types or tissues"/>
</dbReference>
<dbReference type="GO" id="GO:0005847">
    <property type="term" value="C:mRNA cleavage and polyadenylation specificity factor complex"/>
    <property type="evidence" value="ECO:0000250"/>
    <property type="project" value="FlyBase"/>
</dbReference>
<dbReference type="GO" id="GO:0005634">
    <property type="term" value="C:nucleus"/>
    <property type="evidence" value="ECO:0000318"/>
    <property type="project" value="GO_Central"/>
</dbReference>
<dbReference type="GO" id="GO:0035925">
    <property type="term" value="F:mRNA 3'-UTR AU-rich region binding"/>
    <property type="evidence" value="ECO:0000250"/>
    <property type="project" value="FlyBase"/>
</dbReference>
<dbReference type="GO" id="GO:0017022">
    <property type="term" value="F:myosin binding"/>
    <property type="evidence" value="ECO:0000353"/>
    <property type="project" value="FlyBase"/>
</dbReference>
<dbReference type="GO" id="GO:0031124">
    <property type="term" value="P:mRNA 3'-end processing"/>
    <property type="evidence" value="ECO:0000304"/>
    <property type="project" value="FlyBase"/>
</dbReference>
<dbReference type="FunFam" id="1.10.150.910:FF:000005">
    <property type="entry name" value="Cleavage and polyadenylation specific factor 1"/>
    <property type="match status" value="1"/>
</dbReference>
<dbReference type="FunFam" id="2.130.10.10:FF:000766">
    <property type="entry name" value="Cleavage and polyadenylation specificity factor cpsf"/>
    <property type="match status" value="1"/>
</dbReference>
<dbReference type="FunFam" id="2.130.10.10:FF:000100">
    <property type="entry name" value="Cleavage and polyadenylation specificity factor subunit 1"/>
    <property type="match status" value="1"/>
</dbReference>
<dbReference type="Gene3D" id="1.10.150.910">
    <property type="match status" value="1"/>
</dbReference>
<dbReference type="Gene3D" id="2.130.10.10">
    <property type="entry name" value="YVTN repeat-like/Quinoprotein amine dehydrogenase"/>
    <property type="match status" value="2"/>
</dbReference>
<dbReference type="InterPro" id="IPR018846">
    <property type="entry name" value="Beta-prop_RSE1/DDB1/CPSF1_1st"/>
</dbReference>
<dbReference type="InterPro" id="IPR004871">
    <property type="entry name" value="Cleavage/polyA-sp_fac_asu_C"/>
</dbReference>
<dbReference type="InterPro" id="IPR050358">
    <property type="entry name" value="RSE1/DDB1/CFT1/CPSF1"/>
</dbReference>
<dbReference type="InterPro" id="IPR015943">
    <property type="entry name" value="WD40/YVTN_repeat-like_dom_sf"/>
</dbReference>
<dbReference type="PANTHER" id="PTHR10644">
    <property type="entry name" value="DNA REPAIR/RNA PROCESSING CPSF FAMILY"/>
    <property type="match status" value="1"/>
</dbReference>
<dbReference type="Pfam" id="PF10433">
    <property type="entry name" value="Beta-prop_RSE1_1st"/>
    <property type="match status" value="1"/>
</dbReference>
<dbReference type="Pfam" id="PF23726">
    <property type="entry name" value="Beta-prop_RSE1_2nd"/>
    <property type="match status" value="1"/>
</dbReference>
<dbReference type="Pfam" id="PF03178">
    <property type="entry name" value="CPSF_A"/>
    <property type="match status" value="1"/>
</dbReference>
<protein>
    <recommendedName>
        <fullName>Cleavage and polyadenylation specificity factor subunit 1</fullName>
    </recommendedName>
    <alternativeName>
        <fullName>Cleavage and polyadenylation specificity factor 160 kDa subunit</fullName>
        <shortName>CPSF 160 kDa subunit</shortName>
        <shortName>dCPSF 160</shortName>
    </alternativeName>
</protein>
<reference key="1">
    <citation type="journal article" date="1998" name="Mol. Gen. Genet.">
        <title>Characterization of a Drosophila homologue of the 160-kDa subunit of the cleavage and polyadenylation specificity factor CPSF.</title>
        <authorList>
            <person name="Salinas C.A."/>
            <person name="Sinclair D.A."/>
            <person name="O'Hare K."/>
            <person name="Brock H.W."/>
        </authorList>
    </citation>
    <scope>NUCLEOTIDE SEQUENCE [MRNA] (ISOFORM A)</scope>
    <source>
        <strain>Berkeley</strain>
        <tissue>Embryo</tissue>
        <tissue>Eye imaginal disk</tissue>
    </source>
</reference>
<reference key="2">
    <citation type="journal article" date="2000" name="Science">
        <title>The genome sequence of Drosophila melanogaster.</title>
        <authorList>
            <person name="Adams M.D."/>
            <person name="Celniker S.E."/>
            <person name="Holt R.A."/>
            <person name="Evans C.A."/>
            <person name="Gocayne J.D."/>
            <person name="Amanatides P.G."/>
            <person name="Scherer S.E."/>
            <person name="Li P.W."/>
            <person name="Hoskins R.A."/>
            <person name="Galle R.F."/>
            <person name="George R.A."/>
            <person name="Lewis S.E."/>
            <person name="Richards S."/>
            <person name="Ashburner M."/>
            <person name="Henderson S.N."/>
            <person name="Sutton G.G."/>
            <person name="Wortman J.R."/>
            <person name="Yandell M.D."/>
            <person name="Zhang Q."/>
            <person name="Chen L.X."/>
            <person name="Brandon R.C."/>
            <person name="Rogers Y.-H.C."/>
            <person name="Blazej R.G."/>
            <person name="Champe M."/>
            <person name="Pfeiffer B.D."/>
            <person name="Wan K.H."/>
            <person name="Doyle C."/>
            <person name="Baxter E.G."/>
            <person name="Helt G."/>
            <person name="Nelson C.R."/>
            <person name="Miklos G.L.G."/>
            <person name="Abril J.F."/>
            <person name="Agbayani A."/>
            <person name="An H.-J."/>
            <person name="Andrews-Pfannkoch C."/>
            <person name="Baldwin D."/>
            <person name="Ballew R.M."/>
            <person name="Basu A."/>
            <person name="Baxendale J."/>
            <person name="Bayraktaroglu L."/>
            <person name="Beasley E.M."/>
            <person name="Beeson K.Y."/>
            <person name="Benos P.V."/>
            <person name="Berman B.P."/>
            <person name="Bhandari D."/>
            <person name="Bolshakov S."/>
            <person name="Borkova D."/>
            <person name="Botchan M.R."/>
            <person name="Bouck J."/>
            <person name="Brokstein P."/>
            <person name="Brottier P."/>
            <person name="Burtis K.C."/>
            <person name="Busam D.A."/>
            <person name="Butler H."/>
            <person name="Cadieu E."/>
            <person name="Center A."/>
            <person name="Chandra I."/>
            <person name="Cherry J.M."/>
            <person name="Cawley S."/>
            <person name="Dahlke C."/>
            <person name="Davenport L.B."/>
            <person name="Davies P."/>
            <person name="de Pablos B."/>
            <person name="Delcher A."/>
            <person name="Deng Z."/>
            <person name="Mays A.D."/>
            <person name="Dew I."/>
            <person name="Dietz S.M."/>
            <person name="Dodson K."/>
            <person name="Doup L.E."/>
            <person name="Downes M."/>
            <person name="Dugan-Rocha S."/>
            <person name="Dunkov B.C."/>
            <person name="Dunn P."/>
            <person name="Durbin K.J."/>
            <person name="Evangelista C.C."/>
            <person name="Ferraz C."/>
            <person name="Ferriera S."/>
            <person name="Fleischmann W."/>
            <person name="Fosler C."/>
            <person name="Gabrielian A.E."/>
            <person name="Garg N.S."/>
            <person name="Gelbart W.M."/>
            <person name="Glasser K."/>
            <person name="Glodek A."/>
            <person name="Gong F."/>
            <person name="Gorrell J.H."/>
            <person name="Gu Z."/>
            <person name="Guan P."/>
            <person name="Harris M."/>
            <person name="Harris N.L."/>
            <person name="Harvey D.A."/>
            <person name="Heiman T.J."/>
            <person name="Hernandez J.R."/>
            <person name="Houck J."/>
            <person name="Hostin D."/>
            <person name="Houston K.A."/>
            <person name="Howland T.J."/>
            <person name="Wei M.-H."/>
            <person name="Ibegwam C."/>
            <person name="Jalali M."/>
            <person name="Kalush F."/>
            <person name="Karpen G.H."/>
            <person name="Ke Z."/>
            <person name="Kennison J.A."/>
            <person name="Ketchum K.A."/>
            <person name="Kimmel B.E."/>
            <person name="Kodira C.D."/>
            <person name="Kraft C.L."/>
            <person name="Kravitz S."/>
            <person name="Kulp D."/>
            <person name="Lai Z."/>
            <person name="Lasko P."/>
            <person name="Lei Y."/>
            <person name="Levitsky A.A."/>
            <person name="Li J.H."/>
            <person name="Li Z."/>
            <person name="Liang Y."/>
            <person name="Lin X."/>
            <person name="Liu X."/>
            <person name="Mattei B."/>
            <person name="McIntosh T.C."/>
            <person name="McLeod M.P."/>
            <person name="McPherson D."/>
            <person name="Merkulov G."/>
            <person name="Milshina N.V."/>
            <person name="Mobarry C."/>
            <person name="Morris J."/>
            <person name="Moshrefi A."/>
            <person name="Mount S.M."/>
            <person name="Moy M."/>
            <person name="Murphy B."/>
            <person name="Murphy L."/>
            <person name="Muzny D.M."/>
            <person name="Nelson D.L."/>
            <person name="Nelson D.R."/>
            <person name="Nelson K.A."/>
            <person name="Nixon K."/>
            <person name="Nusskern D.R."/>
            <person name="Pacleb J.M."/>
            <person name="Palazzolo M."/>
            <person name="Pittman G.S."/>
            <person name="Pan S."/>
            <person name="Pollard J."/>
            <person name="Puri V."/>
            <person name="Reese M.G."/>
            <person name="Reinert K."/>
            <person name="Remington K."/>
            <person name="Saunders R.D.C."/>
            <person name="Scheeler F."/>
            <person name="Shen H."/>
            <person name="Shue B.C."/>
            <person name="Siden-Kiamos I."/>
            <person name="Simpson M."/>
            <person name="Skupski M.P."/>
            <person name="Smith T.J."/>
            <person name="Spier E."/>
            <person name="Spradling A.C."/>
            <person name="Stapleton M."/>
            <person name="Strong R."/>
            <person name="Sun E."/>
            <person name="Svirskas R."/>
            <person name="Tector C."/>
            <person name="Turner R."/>
            <person name="Venter E."/>
            <person name="Wang A.H."/>
            <person name="Wang X."/>
            <person name="Wang Z.-Y."/>
            <person name="Wassarman D.A."/>
            <person name="Weinstock G.M."/>
            <person name="Weissenbach J."/>
            <person name="Williams S.M."/>
            <person name="Woodage T."/>
            <person name="Worley K.C."/>
            <person name="Wu D."/>
            <person name="Yang S."/>
            <person name="Yao Q.A."/>
            <person name="Ye J."/>
            <person name="Yeh R.-F."/>
            <person name="Zaveri J.S."/>
            <person name="Zhan M."/>
            <person name="Zhang G."/>
            <person name="Zhao Q."/>
            <person name="Zheng L."/>
            <person name="Zheng X.H."/>
            <person name="Zhong F.N."/>
            <person name="Zhong W."/>
            <person name="Zhou X."/>
            <person name="Zhu S.C."/>
            <person name="Zhu X."/>
            <person name="Smith H.O."/>
            <person name="Gibbs R.A."/>
            <person name="Myers E.W."/>
            <person name="Rubin G.M."/>
            <person name="Venter J.C."/>
        </authorList>
    </citation>
    <scope>NUCLEOTIDE SEQUENCE [LARGE SCALE GENOMIC DNA]</scope>
    <source>
        <strain>Berkeley</strain>
    </source>
</reference>
<reference key="3">
    <citation type="journal article" date="2002" name="Genome Biol.">
        <title>Annotation of the Drosophila melanogaster euchromatic genome: a systematic review.</title>
        <authorList>
            <person name="Misra S."/>
            <person name="Crosby M.A."/>
            <person name="Mungall C.J."/>
            <person name="Matthews B.B."/>
            <person name="Campbell K.S."/>
            <person name="Hradecky P."/>
            <person name="Huang Y."/>
            <person name="Kaminker J.S."/>
            <person name="Millburn G.H."/>
            <person name="Prochnik S.E."/>
            <person name="Smith C.D."/>
            <person name="Tupy J.L."/>
            <person name="Whitfield E.J."/>
            <person name="Bayraktaroglu L."/>
            <person name="Berman B.P."/>
            <person name="Bettencourt B.R."/>
            <person name="Celniker S.E."/>
            <person name="de Grey A.D.N.J."/>
            <person name="Drysdale R.A."/>
            <person name="Harris N.L."/>
            <person name="Richter J."/>
            <person name="Russo S."/>
            <person name="Schroeder A.J."/>
            <person name="Shu S.Q."/>
            <person name="Stapleton M."/>
            <person name="Yamada C."/>
            <person name="Ashburner M."/>
            <person name="Gelbart W.M."/>
            <person name="Rubin G.M."/>
            <person name="Lewis S.E."/>
        </authorList>
    </citation>
    <scope>GENOME REANNOTATION</scope>
    <scope>ALTERNATIVE SPLICING</scope>
    <source>
        <strain>Berkeley</strain>
    </source>
</reference>
<reference key="4">
    <citation type="journal article" date="2002" name="Genome Biol.">
        <title>A Drosophila full-length cDNA resource.</title>
        <authorList>
            <person name="Stapleton M."/>
            <person name="Carlson J.W."/>
            <person name="Brokstein P."/>
            <person name="Yu C."/>
            <person name="Champe M."/>
            <person name="George R.A."/>
            <person name="Guarin H."/>
            <person name="Kronmiller B."/>
            <person name="Pacleb J.M."/>
            <person name="Park S."/>
            <person name="Wan K.H."/>
            <person name="Rubin G.M."/>
            <person name="Celniker S.E."/>
        </authorList>
    </citation>
    <scope>NUCLEOTIDE SEQUENCE [LARGE SCALE MRNA] (ISOFORM B)</scope>
    <source>
        <strain>Berkeley</strain>
        <tissue>Embryo</tissue>
    </source>
</reference>
<reference key="5">
    <citation type="journal article" date="2009" name="Mol. Cell">
        <title>A core complex of CPSF73, CPSF100, and Symplekin may form two different cleavage factors for processing of poly(A) and histone mRNAs.</title>
        <authorList>
            <person name="Sullivan K.D."/>
            <person name="Steiniger M."/>
            <person name="Marzluff W.F."/>
        </authorList>
    </citation>
    <scope>IDENTIFICATION IN THE CPSF COMPLEX</scope>
</reference>
<name>CPSF1_DROME</name>
<feature type="chain" id="PRO_0000074389" description="Cleavage and polyadenylation specificity factor subunit 1">
    <location>
        <begin position="1"/>
        <end position="1455"/>
    </location>
</feature>
<feature type="splice variant" id="VSP_001216" description="In isoform B." evidence="3">
    <location>
        <begin position="244"/>
        <end position="278"/>
    </location>
</feature>
<feature type="sequence conflict" description="In Ref. 1; AAF98388." evidence="4" ref="1">
    <original>M</original>
    <variation>L</variation>
    <location>
        <position position="907"/>
    </location>
</feature>
<feature type="sequence conflict" description="In Ref. 1; AAF98388." evidence="4" ref="1">
    <original>D</original>
    <variation>E</variation>
    <location>
        <position position="921"/>
    </location>
</feature>
<feature type="sequence conflict" description="In Ref. 1; AAF98388." evidence="4" ref="1">
    <original>G</original>
    <variation>D</variation>
    <location>
        <position position="1076"/>
    </location>
</feature>
<organism>
    <name type="scientific">Drosophila melanogaster</name>
    <name type="common">Fruit fly</name>
    <dbReference type="NCBI Taxonomy" id="7227"/>
    <lineage>
        <taxon>Eukaryota</taxon>
        <taxon>Metazoa</taxon>
        <taxon>Ecdysozoa</taxon>
        <taxon>Arthropoda</taxon>
        <taxon>Hexapoda</taxon>
        <taxon>Insecta</taxon>
        <taxon>Pterygota</taxon>
        <taxon>Neoptera</taxon>
        <taxon>Endopterygota</taxon>
        <taxon>Diptera</taxon>
        <taxon>Brachycera</taxon>
        <taxon>Muscomorpha</taxon>
        <taxon>Ephydroidea</taxon>
        <taxon>Drosophilidae</taxon>
        <taxon>Drosophila</taxon>
        <taxon>Sophophora</taxon>
    </lineage>
</organism>
<keyword id="KW-0025">Alternative splicing</keyword>
<keyword id="KW-0507">mRNA processing</keyword>
<keyword id="KW-0539">Nucleus</keyword>
<keyword id="KW-1185">Reference proteome</keyword>
<keyword id="KW-0694">RNA-binding</keyword>
<evidence type="ECO:0000250" key="1"/>
<evidence type="ECO:0000269" key="2">
    <source>
    </source>
</evidence>
<evidence type="ECO:0000303" key="3">
    <source>
    </source>
</evidence>
<evidence type="ECO:0000305" key="4"/>
<comment type="function">
    <text evidence="1">Component of the cleavage and polyadenylation specificity factor (CPSF) complex that plays a key role in pre-mRNA 3'-end formation, recognizing the AAUAAA signal sequence and interacting with poly(A) polymerase and other factors to bring about cleavage and poly(A) addition. This subunit is involved in the RNA recognition step of the polyadenylation reaction (By similarity).</text>
</comment>
<comment type="subunit">
    <text evidence="2">Component of the cleavage and polyadenylation specificity factor (CPSF) complex, composed of at least Clp, Cpsf73, Cpsf100 and Cpsf160.</text>
</comment>
<comment type="subcellular location">
    <subcellularLocation>
        <location evidence="1">Nucleus</location>
    </subcellularLocation>
</comment>
<comment type="alternative products">
    <event type="alternative splicing"/>
    <isoform>
        <id>Q9V726-1</id>
        <name>A</name>
        <sequence type="displayed"/>
    </isoform>
    <isoform>
        <id>Q9V726-2</id>
        <name>B</name>
        <sequence type="described" ref="VSP_001216"/>
    </isoform>
</comment>
<comment type="similarity">
    <text evidence="4">Belongs to the CPSF1 family.</text>
</comment>
<sequence length="1455" mass="164681">MFSMCKQTHSATAVEFSIACRFFNNLDENLVVAGANVLKVYRIAPNVEASQRQKLNPSEMRLAPKMRLECLATYTLYGNVMSLQCVSLAGAMRDALLISFKDAKLSVLQHDPDTFALKTLSLHYFEEDDIRGGWTGRYFVPTVRVDPDSRCAVMLVYGKRLVVLPFRKDNSLDEIELADVKPIKKAPTAMVSRTPIMASYLIALRDLDEKIDNVLDIQFLHGYYEPTLLILYEPVRTCPGRIKVRSDTCVLVAISLNIQQRVHPIIWTVNSLPFDCLQVYPIQKPIGGCLVMTVNAVIYLNQSVPPYGVSLNSSADNSTAFPLKPQDGVRISLDCANFAFIDVDKLVISLRTGDLYVLTLCVDSMRTVRNFHFHKAAASVLTSCICVLHSEYIFLGSRLGNSLLLHFTEEDQSTVITLDEVEQQSEQQQRNLQDEDQNLEEIFDVDQLEMAPTQAKSRRIEDEELEVYGSGAKASVLQLRKFIFEVCDSLMNVAPINYMCAGERVEFEEDGVTLRPHAESLQDLKIELVAATGHSKNGALSVFVNCINPQIITSFELDGCLDVWTVFDDATKKSSRNDQHDFMLLSQRNSTLVLQTGQEINEIENTGFTVNQPTIFVGNLGQQRFIVQVTTRHVRLLQGTRLIQNVPIDVGSPVVQVSIADPYVCLRVLNGQVITLALRETRGTPRLAINKHTISSSPAVVAISAYKDLSGLFTVKGDDINLTGSSNSAFGHSFGGYMKAEPNMKVEDEEDLLYGDAGSAFKMNSMADLAKQSKQKNSDWWRRLLVQAKPSYWLVVARQSGTLEIYSMPDMKLVYLVNDVGNGSMVLTDAMEFVPISLTTQENSKAGIVQACMPQHANSPLPLELSVIGLGLNGERPLLLVRTRVELLIYQVFRYPKGHLKIRFRKMDQLNLLDQQPTHIDLDENDEQEEIESYQMQPKYVQKLRPFANVGGLSGVMVCGVNPCFVFLTFRGELRIHRLLGNGDVRSFAAFNNVNIPNGFLYFDTTYELKISVLPSYLSYDSVWPVRKVPLRCTPRQLVYHRENRVYCLITQTEEPMTKYYRFNGEDKELSEESRGERFIYPIGSQFEMVLISPETWEIVPDASITFEPWEHVTAFKIVKLSYEGTRSGLKEYLCIGTNFNYSEDITSRGNIHIYDIIEVVPEPGKPMTKFKIKEIFKKEQKGPVSAISDVLGFLVTGLGQKIYIWQLRDGDLIGVAFIDTNIYVHQIITVKSLIFIADVYKSISLLRFQEEYRTLSLASRDFNPLEVYGIEFMVDNSNLGFLVTDAERNIIVYMYQPEARESLGGQKLLRKADYHLGQVVNTMFRVQCHQKGLHQRQPFLYENKHFVVYGTLDGALGYCLPLPEKVYRRFLMLQNVLLSYQEHLCGLNPKEYRTLKSSKKQGINPSRCIIDGDLIWSYRLMANSERNEVAKKIGTRTEEILGDLLEIERLASVF</sequence>
<proteinExistence type="evidence at protein level"/>
<accession>Q9V726</accession>
<accession>Q7KR84</accession>
<accession>Q960R9</accession>
<accession>Q9GV83</accession>
<accession>Q9GV84</accession>
<accession>Q9GV85</accession>
<gene>
    <name type="primary">Cpsf160</name>
    <name type="synonym">cpsf</name>
    <name type="ORF">CG10110</name>
</gene>